<feature type="chain" id="PRO_0000230414" description="Small ribosomal subunit protein uS11">
    <location>
        <begin position="1"/>
        <end position="131"/>
    </location>
</feature>
<name>RS11_SYNC1</name>
<keyword id="KW-1185">Reference proteome</keyword>
<keyword id="KW-0687">Ribonucleoprotein</keyword>
<keyword id="KW-0689">Ribosomal protein</keyword>
<keyword id="KW-0694">RNA-binding</keyword>
<keyword id="KW-0699">rRNA-binding</keyword>
<dbReference type="EMBL" id="CP000142">
    <property type="protein sequence ID" value="ABA87985.1"/>
    <property type="molecule type" value="Genomic_DNA"/>
</dbReference>
<dbReference type="RefSeq" id="WP_011340428.1">
    <property type="nucleotide sequence ID" value="NC_007498.2"/>
</dbReference>
<dbReference type="SMR" id="Q3A6M2"/>
<dbReference type="STRING" id="338963.Pcar_0726"/>
<dbReference type="KEGG" id="pca:Pcar_0726"/>
<dbReference type="eggNOG" id="COG0100">
    <property type="taxonomic scope" value="Bacteria"/>
</dbReference>
<dbReference type="HOGENOM" id="CLU_072439_5_0_7"/>
<dbReference type="OrthoDB" id="9806415at2"/>
<dbReference type="Proteomes" id="UP000002534">
    <property type="component" value="Chromosome"/>
</dbReference>
<dbReference type="GO" id="GO:1990904">
    <property type="term" value="C:ribonucleoprotein complex"/>
    <property type="evidence" value="ECO:0007669"/>
    <property type="project" value="UniProtKB-KW"/>
</dbReference>
<dbReference type="GO" id="GO:0005840">
    <property type="term" value="C:ribosome"/>
    <property type="evidence" value="ECO:0007669"/>
    <property type="project" value="UniProtKB-KW"/>
</dbReference>
<dbReference type="GO" id="GO:0019843">
    <property type="term" value="F:rRNA binding"/>
    <property type="evidence" value="ECO:0007669"/>
    <property type="project" value="UniProtKB-UniRule"/>
</dbReference>
<dbReference type="GO" id="GO:0003735">
    <property type="term" value="F:structural constituent of ribosome"/>
    <property type="evidence" value="ECO:0007669"/>
    <property type="project" value="InterPro"/>
</dbReference>
<dbReference type="GO" id="GO:0006412">
    <property type="term" value="P:translation"/>
    <property type="evidence" value="ECO:0007669"/>
    <property type="project" value="UniProtKB-UniRule"/>
</dbReference>
<dbReference type="FunFam" id="3.30.420.80:FF:000001">
    <property type="entry name" value="30S ribosomal protein S11"/>
    <property type="match status" value="1"/>
</dbReference>
<dbReference type="Gene3D" id="3.30.420.80">
    <property type="entry name" value="Ribosomal protein S11"/>
    <property type="match status" value="1"/>
</dbReference>
<dbReference type="HAMAP" id="MF_01310">
    <property type="entry name" value="Ribosomal_uS11"/>
    <property type="match status" value="1"/>
</dbReference>
<dbReference type="InterPro" id="IPR001971">
    <property type="entry name" value="Ribosomal_uS11"/>
</dbReference>
<dbReference type="InterPro" id="IPR019981">
    <property type="entry name" value="Ribosomal_uS11_bac-type"/>
</dbReference>
<dbReference type="InterPro" id="IPR018102">
    <property type="entry name" value="Ribosomal_uS11_CS"/>
</dbReference>
<dbReference type="InterPro" id="IPR036967">
    <property type="entry name" value="Ribosomal_uS11_sf"/>
</dbReference>
<dbReference type="NCBIfam" id="NF003698">
    <property type="entry name" value="PRK05309.1"/>
    <property type="match status" value="1"/>
</dbReference>
<dbReference type="NCBIfam" id="TIGR03632">
    <property type="entry name" value="uS11_bact"/>
    <property type="match status" value="1"/>
</dbReference>
<dbReference type="PANTHER" id="PTHR11759">
    <property type="entry name" value="40S RIBOSOMAL PROTEIN S14/30S RIBOSOMAL PROTEIN S11"/>
    <property type="match status" value="1"/>
</dbReference>
<dbReference type="Pfam" id="PF00411">
    <property type="entry name" value="Ribosomal_S11"/>
    <property type="match status" value="1"/>
</dbReference>
<dbReference type="PIRSF" id="PIRSF002131">
    <property type="entry name" value="Ribosomal_S11"/>
    <property type="match status" value="1"/>
</dbReference>
<dbReference type="SUPFAM" id="SSF53137">
    <property type="entry name" value="Translational machinery components"/>
    <property type="match status" value="1"/>
</dbReference>
<dbReference type="PROSITE" id="PS00054">
    <property type="entry name" value="RIBOSOMAL_S11"/>
    <property type="match status" value="1"/>
</dbReference>
<sequence length="131" mass="14032">MAKGSKRVVRKRAEKKNIANGIAHIQATFNNTIVTITDIAGNVISWSTCGTMNFKGSRKSTPFAAQIAAEDAAKKAMEHGLRSVEVRVKGPGSGRESALRALSSAGLNISVIKDVTPIPHNGCRPPKRRRV</sequence>
<protein>
    <recommendedName>
        <fullName evidence="1">Small ribosomal subunit protein uS11</fullName>
    </recommendedName>
    <alternativeName>
        <fullName evidence="2">30S ribosomal protein S11</fullName>
    </alternativeName>
</protein>
<organism>
    <name type="scientific">Syntrophotalea carbinolica (strain DSM 2380 / NBRC 103641 / GraBd1)</name>
    <name type="common">Pelobacter carbinolicus</name>
    <dbReference type="NCBI Taxonomy" id="338963"/>
    <lineage>
        <taxon>Bacteria</taxon>
        <taxon>Pseudomonadati</taxon>
        <taxon>Thermodesulfobacteriota</taxon>
        <taxon>Desulfuromonadia</taxon>
        <taxon>Desulfuromonadales</taxon>
        <taxon>Syntrophotaleaceae</taxon>
        <taxon>Syntrophotalea</taxon>
    </lineage>
</organism>
<gene>
    <name evidence="1" type="primary">rpsK</name>
    <name type="ordered locus">Pcar_0726</name>
</gene>
<proteinExistence type="inferred from homology"/>
<reference key="1">
    <citation type="submission" date="2005-10" db="EMBL/GenBank/DDBJ databases">
        <title>Complete sequence of Pelobacter carbinolicus DSM 2380.</title>
        <authorList>
            <person name="Copeland A."/>
            <person name="Lucas S."/>
            <person name="Lapidus A."/>
            <person name="Barry K."/>
            <person name="Detter J.C."/>
            <person name="Glavina T."/>
            <person name="Hammon N."/>
            <person name="Israni S."/>
            <person name="Pitluck S."/>
            <person name="Chertkov O."/>
            <person name="Schmutz J."/>
            <person name="Larimer F."/>
            <person name="Land M."/>
            <person name="Kyrpides N."/>
            <person name="Ivanova N."/>
            <person name="Richardson P."/>
        </authorList>
    </citation>
    <scope>NUCLEOTIDE SEQUENCE [LARGE SCALE GENOMIC DNA]</scope>
    <source>
        <strain>DSM 2380 / NBRC 103641 / GraBd1</strain>
    </source>
</reference>
<evidence type="ECO:0000255" key="1">
    <source>
        <dbReference type="HAMAP-Rule" id="MF_01310"/>
    </source>
</evidence>
<evidence type="ECO:0000305" key="2"/>
<accession>Q3A6M2</accession>
<comment type="function">
    <text evidence="1">Located on the platform of the 30S subunit, it bridges several disparate RNA helices of the 16S rRNA. Forms part of the Shine-Dalgarno cleft in the 70S ribosome.</text>
</comment>
<comment type="subunit">
    <text evidence="1">Part of the 30S ribosomal subunit. Interacts with proteins S7 and S18. Binds to IF-3.</text>
</comment>
<comment type="similarity">
    <text evidence="1">Belongs to the universal ribosomal protein uS11 family.</text>
</comment>